<organism>
    <name type="scientific">Hepatitis B virus genotype D (isolate France/alpha1/1989)</name>
    <name type="common">HBV-D</name>
    <dbReference type="NCBI Taxonomy" id="10411"/>
    <lineage>
        <taxon>Viruses</taxon>
        <taxon>Riboviria</taxon>
        <taxon>Pararnavirae</taxon>
        <taxon>Artverviricota</taxon>
        <taxon>Revtraviricetes</taxon>
        <taxon>Blubervirales</taxon>
        <taxon>Hepadnaviridae</taxon>
        <taxon>Orthohepadnavirus</taxon>
        <taxon>Hepatitis B virus</taxon>
    </lineage>
</organism>
<gene>
    <name evidence="1" type="primary">X</name>
</gene>
<protein>
    <recommendedName>
        <fullName evidence="1">Protein X</fullName>
    </recommendedName>
    <alternativeName>
        <fullName evidence="1">HBx</fullName>
    </alternativeName>
    <alternativeName>
        <fullName evidence="1">Peptide X</fullName>
    </alternativeName>
    <alternativeName>
        <fullName evidence="1">pX</fullName>
    </alternativeName>
</protein>
<accession>P24026</accession>
<name>X_HBVD2</name>
<reference key="1">
    <citation type="journal article" date="1990" name="Virology">
        <title>Active hepatitis B virus replication in the presence of anti-HBe is associated with viral variants containing an inactive pre-C region.</title>
        <authorList>
            <person name="Tong S."/>
            <person name="Li J."/>
            <person name="Vitvitski L."/>
            <person name="Trepo C."/>
        </authorList>
    </citation>
    <scope>NUCLEOTIDE SEQUENCE [GENOMIC DNA]</scope>
</reference>
<reference key="2">
    <citation type="journal article" date="2004" name="J. Virol.">
        <title>The enigmatic X gene of hepatitis B virus.</title>
        <authorList>
            <person name="Bouchard M.J."/>
            <person name="Schneider R.J."/>
        </authorList>
    </citation>
    <scope>REVIEW</scope>
</reference>
<reference key="3">
    <citation type="journal article" date="2006" name="Cancer Sci.">
        <title>Molecular functions and biological roles of hepatitis B virus x protein.</title>
        <authorList>
            <person name="Tang H."/>
            <person name="Oishi N."/>
            <person name="Kaneko S."/>
            <person name="Murakami S."/>
        </authorList>
    </citation>
    <scope>REVIEW</scope>
</reference>
<organismHost>
    <name type="scientific">Homo sapiens</name>
    <name type="common">Human</name>
    <dbReference type="NCBI Taxonomy" id="9606"/>
</organismHost>
<organismHost>
    <name type="scientific">Pan troglodytes</name>
    <name type="common">Chimpanzee</name>
    <dbReference type="NCBI Taxonomy" id="9598"/>
</organismHost>
<keyword id="KW-1074">Activation of host NF-kappa-B by virus</keyword>
<keyword id="KW-0010">Activator</keyword>
<keyword id="KW-0053">Apoptosis</keyword>
<keyword id="KW-1035">Host cytoplasm</keyword>
<keyword id="KW-1079">Host G2/M cell cycle arrest by virus</keyword>
<keyword id="KW-1045">Host mitochondrion</keyword>
<keyword id="KW-1048">Host nucleus</keyword>
<keyword id="KW-0945">Host-virus interaction</keyword>
<keyword id="KW-1121">Modulation of host cell cycle by virus</keyword>
<keyword id="KW-0804">Transcription</keyword>
<keyword id="KW-0805">Transcription regulation</keyword>
<feature type="chain" id="PRO_0000222364" description="Protein X">
    <location>
        <begin position="1"/>
        <end position="154"/>
    </location>
</feature>
<feature type="region of interest" description="Mitochondrial targeting sequence" evidence="1">
    <location>
        <begin position="68"/>
        <end position="117"/>
    </location>
</feature>
<sequence length="154" mass="16671">MAARLCCQLDPARDVLCLRPVGAESRGRPFSGPLGTLSSPSPSAVSTDHGAHLSLRGLPVCAFSSAGPCALRFTSARRMETTVNAHQFLPKVLHKRTLGLSVMSTTDLEAYFKDCLFKDWEESGEEIRLMIFVLGGCRHKLVCAPAPCNFFTSA</sequence>
<proteinExistence type="inferred from homology"/>
<dbReference type="EMBL" id="M32138">
    <property type="protein sequence ID" value="AAA45504.1"/>
    <property type="molecule type" value="Genomic_DNA"/>
</dbReference>
<dbReference type="PIR" id="D34773">
    <property type="entry name" value="QQVLA1"/>
</dbReference>
<dbReference type="Proteomes" id="UP000007929">
    <property type="component" value="Segment"/>
</dbReference>
<dbReference type="GO" id="GO:0033650">
    <property type="term" value="C:host cell mitochondrion"/>
    <property type="evidence" value="ECO:0007669"/>
    <property type="project" value="UniProtKB-SubCell"/>
</dbReference>
<dbReference type="GO" id="GO:0042025">
    <property type="term" value="C:host cell nucleus"/>
    <property type="evidence" value="ECO:0007669"/>
    <property type="project" value="UniProtKB-SubCell"/>
</dbReference>
<dbReference type="GO" id="GO:0006351">
    <property type="term" value="P:DNA-templated transcription"/>
    <property type="evidence" value="ECO:0007669"/>
    <property type="project" value="UniProtKB-UniRule"/>
</dbReference>
<dbReference type="GO" id="GO:0085033">
    <property type="term" value="P:symbiont-mediated activation of host NF-kappaB cascade"/>
    <property type="evidence" value="ECO:0007669"/>
    <property type="project" value="UniProtKB-UniRule"/>
</dbReference>
<dbReference type="GO" id="GO:0039592">
    <property type="term" value="P:symbiont-mediated arrest of host cell cycle during G2/M transition"/>
    <property type="evidence" value="ECO:0007669"/>
    <property type="project" value="UniProtKB-UniRule"/>
</dbReference>
<dbReference type="GO" id="GO:0019079">
    <property type="term" value="P:viral genome replication"/>
    <property type="evidence" value="ECO:0007669"/>
    <property type="project" value="UniProtKB-UniRule"/>
</dbReference>
<dbReference type="HAMAP" id="MF_04074">
    <property type="entry name" value="HBV_X"/>
    <property type="match status" value="1"/>
</dbReference>
<dbReference type="InterPro" id="IPR000236">
    <property type="entry name" value="Transactivation_prot_X"/>
</dbReference>
<dbReference type="Pfam" id="PF00739">
    <property type="entry name" value="X"/>
    <property type="match status" value="1"/>
</dbReference>
<evidence type="ECO:0000255" key="1">
    <source>
        <dbReference type="HAMAP-Rule" id="MF_04074"/>
    </source>
</evidence>
<comment type="function">
    <text evidence="1">Multifunctional protein that plays a role in silencing host antiviral defenses and promoting viral transcription. Does not seem to be essential for HBV infection. May be directly involved in development of cirrhosis and liver cancer (hepatocellular carcinoma). Most of cytosolic activities involve modulation of cytosolic calcium. The effect on apoptosis is controversial depending on the cell types in which the studies have been conducted. May induce apoptosis by localizing in mitochondria and causing loss of mitochondrial membrane potential. May also modulate apoptosis by binding host CFLAR, a key regulator of the death-inducing signaling complex (DISC). Promotes viral transcription by using the host E3 ubiquitin ligase DDB1 to target the SMC5-SMC6 complex to proteasomal degradation. This host complex would otherwise bind to viral episomal DNA, and prevents its transcription. Moderately stimulates transcription of many different viral and cellular transcription elements. Promoters and enhancers stimulated by HBx contain DNA binding sites for NF-kappa-B, AP-1, AP-2, c-EBP, ATF/CREB, or the calcium-activated factor NF-AT.</text>
</comment>
<comment type="subunit">
    <text evidence="1">May form homodimer. May interact with host CEBPA, CFLAR, CREB1, DDB1, E4F1, HBXIP, HSPD1/HSP60, NFKBIA, POLR2E and SMAD4. Interacts with host SMC5-SMC6 complex and induces its degradation. Interacts with host TRPC4AP; leading to prevent ubiquitination of TRPC4AP. Interacts with host PLSCR1; this interaction promotes ubiquitination and degradation of HBx and impairs HBx-mediated cell proliferation.</text>
</comment>
<comment type="subcellular location">
    <subcellularLocation>
        <location evidence="1">Host cytoplasm</location>
    </subcellularLocation>
    <subcellularLocation>
        <location evidence="1">Host nucleus</location>
    </subcellularLocation>
    <subcellularLocation>
        <location evidence="1">Host mitochondrion</location>
    </subcellularLocation>
    <text evidence="1">Mainly cytoplasmic as only a fraction is detected in the nucleus. In cytoplasm, a minor fraction associates with mitochondria or proteasomes.</text>
</comment>
<comment type="PTM">
    <text evidence="1">A fraction may be phosphorylated in insect cells and HepG2 cells, a human hepatoblastoma cell line. Phosphorylated in vitro by host protein kinase C or mitogen-activated protein kinase. N-acetylated in insect cells.</text>
</comment>
<comment type="similarity">
    <text evidence="1">Belongs to the orthohepadnavirus protein X family.</text>
</comment>
<comment type="caution">
    <text>Transcriptional activities should be taken with a grain of salt. As of 2007, all studies demonstrating in vivo interaction between protein X and transcriptional components were performed with significant overexpression of both proteins and in the absence of viral infection.</text>
</comment>